<organism>
    <name type="scientific">Azoarcus sp. (strain BH72)</name>
    <dbReference type="NCBI Taxonomy" id="418699"/>
    <lineage>
        <taxon>Bacteria</taxon>
        <taxon>Pseudomonadati</taxon>
        <taxon>Pseudomonadota</taxon>
        <taxon>Betaproteobacteria</taxon>
        <taxon>Rhodocyclales</taxon>
        <taxon>Zoogloeaceae</taxon>
        <taxon>Azoarcus</taxon>
    </lineage>
</organism>
<reference key="1">
    <citation type="journal article" date="2006" name="Nat. Biotechnol.">
        <title>Complete genome of the mutualistic, N2-fixing grass endophyte Azoarcus sp. strain BH72.</title>
        <authorList>
            <person name="Krause A."/>
            <person name="Ramakumar A."/>
            <person name="Bartels D."/>
            <person name="Battistoni F."/>
            <person name="Bekel T."/>
            <person name="Boch J."/>
            <person name="Boehm M."/>
            <person name="Friedrich F."/>
            <person name="Hurek T."/>
            <person name="Krause L."/>
            <person name="Linke B."/>
            <person name="McHardy A.C."/>
            <person name="Sarkar A."/>
            <person name="Schneiker S."/>
            <person name="Syed A.A."/>
            <person name="Thauer R."/>
            <person name="Vorhoelter F.-J."/>
            <person name="Weidner S."/>
            <person name="Puehler A."/>
            <person name="Reinhold-Hurek B."/>
            <person name="Kaiser O."/>
            <person name="Goesmann A."/>
        </authorList>
    </citation>
    <scope>NUCLEOTIDE SEQUENCE [LARGE SCALE GENOMIC DNA]</scope>
    <source>
        <strain>BH72</strain>
    </source>
</reference>
<sequence>MQVKKLTDLDVRGKKVFIRADLNVPQDEAGNITEDTRIRASIPSIQYCLDNGAAVMVTSHLGRPTEGEVGPDDTLAPVAVRLGQLLHKPVKLIANWVEGGFEVKPGEVVLLENCRCNKGEKKDNEELAKKMAALCDVYVNDAFGTAHRAEATTHGIARFAPVSCAGILMGAEIDALSKALHQPARPLVAIVGGAKVSTKLTILKTLADKVDQLIVGGGIANTFLLAAGKRIGESLAEPEMVREAQQVMDIMKSRGAEVPLPIDVVVADEVSALARANRISVDEVGPHDRILDFGPKTSAKLADIIAHAGTIVWNGPVGVFEHAQFAGGTKMMASAIAHSEAFSIAGGGDTLAAIAKFHIADDVGYISTGGGAFLEFLEGKKLPAIAALEARYEG</sequence>
<dbReference type="EC" id="2.7.2.3" evidence="1"/>
<dbReference type="EMBL" id="AM406670">
    <property type="protein sequence ID" value="CAL95455.1"/>
    <property type="molecule type" value="Genomic_DNA"/>
</dbReference>
<dbReference type="RefSeq" id="WP_011766565.1">
    <property type="nucleotide sequence ID" value="NC_008702.1"/>
</dbReference>
<dbReference type="SMR" id="A1K9F0"/>
<dbReference type="STRING" id="62928.azo2839"/>
<dbReference type="KEGG" id="aoa:dqs_2978"/>
<dbReference type="KEGG" id="azo:azo2839"/>
<dbReference type="eggNOG" id="COG0126">
    <property type="taxonomic scope" value="Bacteria"/>
</dbReference>
<dbReference type="HOGENOM" id="CLU_025427_0_2_4"/>
<dbReference type="OrthoDB" id="9808460at2"/>
<dbReference type="UniPathway" id="UPA00109">
    <property type="reaction ID" value="UER00185"/>
</dbReference>
<dbReference type="Proteomes" id="UP000002588">
    <property type="component" value="Chromosome"/>
</dbReference>
<dbReference type="GO" id="GO:0005829">
    <property type="term" value="C:cytosol"/>
    <property type="evidence" value="ECO:0007669"/>
    <property type="project" value="TreeGrafter"/>
</dbReference>
<dbReference type="GO" id="GO:0043531">
    <property type="term" value="F:ADP binding"/>
    <property type="evidence" value="ECO:0007669"/>
    <property type="project" value="TreeGrafter"/>
</dbReference>
<dbReference type="GO" id="GO:0005524">
    <property type="term" value="F:ATP binding"/>
    <property type="evidence" value="ECO:0007669"/>
    <property type="project" value="UniProtKB-KW"/>
</dbReference>
<dbReference type="GO" id="GO:0004618">
    <property type="term" value="F:phosphoglycerate kinase activity"/>
    <property type="evidence" value="ECO:0007669"/>
    <property type="project" value="UniProtKB-UniRule"/>
</dbReference>
<dbReference type="GO" id="GO:0006094">
    <property type="term" value="P:gluconeogenesis"/>
    <property type="evidence" value="ECO:0007669"/>
    <property type="project" value="TreeGrafter"/>
</dbReference>
<dbReference type="GO" id="GO:0006096">
    <property type="term" value="P:glycolytic process"/>
    <property type="evidence" value="ECO:0007669"/>
    <property type="project" value="UniProtKB-UniRule"/>
</dbReference>
<dbReference type="FunFam" id="3.40.50.1260:FF:000001">
    <property type="entry name" value="Phosphoglycerate kinase"/>
    <property type="match status" value="1"/>
</dbReference>
<dbReference type="FunFam" id="3.40.50.1260:FF:000002">
    <property type="entry name" value="Phosphoglycerate kinase"/>
    <property type="match status" value="1"/>
</dbReference>
<dbReference type="Gene3D" id="3.40.50.1260">
    <property type="entry name" value="Phosphoglycerate kinase, N-terminal domain"/>
    <property type="match status" value="2"/>
</dbReference>
<dbReference type="HAMAP" id="MF_00145">
    <property type="entry name" value="Phosphoglyc_kinase"/>
    <property type="match status" value="1"/>
</dbReference>
<dbReference type="InterPro" id="IPR001576">
    <property type="entry name" value="Phosphoglycerate_kinase"/>
</dbReference>
<dbReference type="InterPro" id="IPR015911">
    <property type="entry name" value="Phosphoglycerate_kinase_CS"/>
</dbReference>
<dbReference type="InterPro" id="IPR015824">
    <property type="entry name" value="Phosphoglycerate_kinase_N"/>
</dbReference>
<dbReference type="InterPro" id="IPR036043">
    <property type="entry name" value="Phosphoglycerate_kinase_sf"/>
</dbReference>
<dbReference type="PANTHER" id="PTHR11406">
    <property type="entry name" value="PHOSPHOGLYCERATE KINASE"/>
    <property type="match status" value="1"/>
</dbReference>
<dbReference type="PANTHER" id="PTHR11406:SF23">
    <property type="entry name" value="PHOSPHOGLYCERATE KINASE 1, CHLOROPLASTIC-RELATED"/>
    <property type="match status" value="1"/>
</dbReference>
<dbReference type="Pfam" id="PF00162">
    <property type="entry name" value="PGK"/>
    <property type="match status" value="1"/>
</dbReference>
<dbReference type="PIRSF" id="PIRSF000724">
    <property type="entry name" value="Pgk"/>
    <property type="match status" value="1"/>
</dbReference>
<dbReference type="PRINTS" id="PR00477">
    <property type="entry name" value="PHGLYCKINASE"/>
</dbReference>
<dbReference type="SUPFAM" id="SSF53748">
    <property type="entry name" value="Phosphoglycerate kinase"/>
    <property type="match status" value="1"/>
</dbReference>
<dbReference type="PROSITE" id="PS00111">
    <property type="entry name" value="PGLYCERATE_KINASE"/>
    <property type="match status" value="1"/>
</dbReference>
<protein>
    <recommendedName>
        <fullName evidence="1">Phosphoglycerate kinase</fullName>
        <ecNumber evidence="1">2.7.2.3</ecNumber>
    </recommendedName>
</protein>
<feature type="chain" id="PRO_1000057961" description="Phosphoglycerate kinase">
    <location>
        <begin position="1"/>
        <end position="394"/>
    </location>
</feature>
<feature type="binding site" evidence="1">
    <location>
        <begin position="21"/>
        <end position="23"/>
    </location>
    <ligand>
        <name>substrate</name>
    </ligand>
</feature>
<feature type="binding site" evidence="1">
    <location>
        <position position="37"/>
    </location>
    <ligand>
        <name>substrate</name>
    </ligand>
</feature>
<feature type="binding site" evidence="1">
    <location>
        <begin position="60"/>
        <end position="63"/>
    </location>
    <ligand>
        <name>substrate</name>
    </ligand>
</feature>
<feature type="binding site" evidence="1">
    <location>
        <position position="115"/>
    </location>
    <ligand>
        <name>substrate</name>
    </ligand>
</feature>
<feature type="binding site" evidence="1">
    <location>
        <position position="148"/>
    </location>
    <ligand>
        <name>substrate</name>
    </ligand>
</feature>
<feature type="binding site" evidence="1">
    <location>
        <position position="199"/>
    </location>
    <ligand>
        <name>ATP</name>
        <dbReference type="ChEBI" id="CHEBI:30616"/>
    </ligand>
</feature>
<feature type="binding site" evidence="1">
    <location>
        <position position="321"/>
    </location>
    <ligand>
        <name>ATP</name>
        <dbReference type="ChEBI" id="CHEBI:30616"/>
    </ligand>
</feature>
<feature type="binding site" evidence="1">
    <location>
        <begin position="347"/>
        <end position="350"/>
    </location>
    <ligand>
        <name>ATP</name>
        <dbReference type="ChEBI" id="CHEBI:30616"/>
    </ligand>
</feature>
<accession>A1K9F0</accession>
<comment type="catalytic activity">
    <reaction evidence="1">
        <text>(2R)-3-phosphoglycerate + ATP = (2R)-3-phospho-glyceroyl phosphate + ADP</text>
        <dbReference type="Rhea" id="RHEA:14801"/>
        <dbReference type="ChEBI" id="CHEBI:30616"/>
        <dbReference type="ChEBI" id="CHEBI:57604"/>
        <dbReference type="ChEBI" id="CHEBI:58272"/>
        <dbReference type="ChEBI" id="CHEBI:456216"/>
        <dbReference type="EC" id="2.7.2.3"/>
    </reaction>
</comment>
<comment type="pathway">
    <text evidence="1">Carbohydrate degradation; glycolysis; pyruvate from D-glyceraldehyde 3-phosphate: step 2/5.</text>
</comment>
<comment type="subunit">
    <text evidence="1">Monomer.</text>
</comment>
<comment type="subcellular location">
    <subcellularLocation>
        <location evidence="1">Cytoplasm</location>
    </subcellularLocation>
</comment>
<comment type="similarity">
    <text evidence="1">Belongs to the phosphoglycerate kinase family.</text>
</comment>
<name>PGK_AZOSB</name>
<proteinExistence type="inferred from homology"/>
<gene>
    <name evidence="1" type="primary">pgk</name>
    <name type="ordered locus">azo2839</name>
</gene>
<keyword id="KW-0067">ATP-binding</keyword>
<keyword id="KW-0963">Cytoplasm</keyword>
<keyword id="KW-0324">Glycolysis</keyword>
<keyword id="KW-0418">Kinase</keyword>
<keyword id="KW-0547">Nucleotide-binding</keyword>
<keyword id="KW-1185">Reference proteome</keyword>
<keyword id="KW-0808">Transferase</keyword>
<evidence type="ECO:0000255" key="1">
    <source>
        <dbReference type="HAMAP-Rule" id="MF_00145"/>
    </source>
</evidence>